<sequence length="188" mass="20737">MSPTPAHLNFITGNKNKLAEVQAILAGVIELRNENIDLVEIQGSVEDVTTDKARRAAEAIKGPVLVEDTCLCFKAMNDLPGPYIKWFMQSLGAAQMHKLLAGFDDKSAQAVCTFAYCEGPGHEPVLFQGRTDGKLVESRGPTAFGWDSCFEYKGQTYAEMDKSEKNKISHRGKALEKLKEWLAQKVDA</sequence>
<protein>
    <recommendedName>
        <fullName evidence="1">Inosine triphosphate pyrophosphatase</fullName>
        <shortName evidence="1">ITPase</shortName>
        <shortName evidence="1">Inosine triphosphatase</shortName>
        <ecNumber evidence="1">3.6.1.66</ecNumber>
    </recommendedName>
    <alternativeName>
        <fullName evidence="1">Non-canonical purine NTP pyrophosphatase</fullName>
    </alternativeName>
    <alternativeName>
        <fullName evidence="1">Non-standard purine NTP pyrophosphatase</fullName>
    </alternativeName>
    <alternativeName>
        <fullName evidence="1">Nucleoside-triphosphate diphosphatase</fullName>
    </alternativeName>
    <alternativeName>
        <fullName evidence="1">Nucleoside-triphosphate pyrophosphatase</fullName>
        <shortName evidence="1">NTPase</shortName>
    </alternativeName>
    <alternativeName>
        <fullName evidence="1">XTP/dITP diphosphatase</fullName>
    </alternativeName>
</protein>
<keyword id="KW-0963">Cytoplasm</keyword>
<keyword id="KW-0378">Hydrolase</keyword>
<keyword id="KW-0460">Magnesium</keyword>
<keyword id="KW-0464">Manganese</keyword>
<keyword id="KW-0479">Metal-binding</keyword>
<keyword id="KW-0546">Nucleotide metabolism</keyword>
<keyword id="KW-0547">Nucleotide-binding</keyword>
<keyword id="KW-0539">Nucleus</keyword>
<name>ITPA_PHANO</name>
<proteinExistence type="inferred from homology"/>
<dbReference type="EC" id="3.6.1.66" evidence="1"/>
<dbReference type="EMBL" id="CH445338">
    <property type="protein sequence ID" value="EAT83613.2"/>
    <property type="molecule type" value="Genomic_DNA"/>
</dbReference>
<dbReference type="RefSeq" id="XP_001799715.1">
    <property type="nucleotide sequence ID" value="XM_001799663.1"/>
</dbReference>
<dbReference type="SMR" id="Q0UFP3"/>
<dbReference type="FunCoup" id="Q0UFP3">
    <property type="interactions" value="695"/>
</dbReference>
<dbReference type="STRING" id="321614.Q0UFP3"/>
<dbReference type="EnsemblFungi" id="SNOT_09421">
    <property type="protein sequence ID" value="SNOT_09421"/>
    <property type="gene ID" value="SNOG_09421"/>
</dbReference>
<dbReference type="GeneID" id="5976616"/>
<dbReference type="KEGG" id="pno:SNOG_09421"/>
<dbReference type="VEuPathDB" id="FungiDB:JI435_094210"/>
<dbReference type="eggNOG" id="KOG3222">
    <property type="taxonomic scope" value="Eukaryota"/>
</dbReference>
<dbReference type="HOGENOM" id="CLU_082080_1_1_1"/>
<dbReference type="InParanoid" id="Q0UFP3"/>
<dbReference type="OrthoDB" id="6288734at2759"/>
<dbReference type="Proteomes" id="UP000001055">
    <property type="component" value="Unassembled WGS sequence"/>
</dbReference>
<dbReference type="GO" id="GO:0005737">
    <property type="term" value="C:cytoplasm"/>
    <property type="evidence" value="ECO:0000318"/>
    <property type="project" value="GO_Central"/>
</dbReference>
<dbReference type="GO" id="GO:0005634">
    <property type="term" value="C:nucleus"/>
    <property type="evidence" value="ECO:0007669"/>
    <property type="project" value="UniProtKB-SubCell"/>
</dbReference>
<dbReference type="GO" id="GO:0035870">
    <property type="term" value="F:dITP diphosphatase activity"/>
    <property type="evidence" value="ECO:0007669"/>
    <property type="project" value="RHEA"/>
</dbReference>
<dbReference type="GO" id="GO:0036220">
    <property type="term" value="F:ITP diphosphatase activity"/>
    <property type="evidence" value="ECO:0007669"/>
    <property type="project" value="RHEA"/>
</dbReference>
<dbReference type="GO" id="GO:0046872">
    <property type="term" value="F:metal ion binding"/>
    <property type="evidence" value="ECO:0007669"/>
    <property type="project" value="UniProtKB-KW"/>
</dbReference>
<dbReference type="GO" id="GO:0047429">
    <property type="term" value="F:nucleoside triphosphate diphosphatase activity"/>
    <property type="evidence" value="ECO:0000318"/>
    <property type="project" value="GO_Central"/>
</dbReference>
<dbReference type="GO" id="GO:0000166">
    <property type="term" value="F:nucleotide binding"/>
    <property type="evidence" value="ECO:0007669"/>
    <property type="project" value="UniProtKB-KW"/>
</dbReference>
<dbReference type="GO" id="GO:0036222">
    <property type="term" value="F:XTP diphosphatase activity"/>
    <property type="evidence" value="ECO:0007669"/>
    <property type="project" value="RHEA"/>
</dbReference>
<dbReference type="GO" id="GO:0009204">
    <property type="term" value="P:deoxyribonucleoside triphosphate catabolic process"/>
    <property type="evidence" value="ECO:0007669"/>
    <property type="project" value="UniProtKB-UniRule"/>
</dbReference>
<dbReference type="GO" id="GO:0009143">
    <property type="term" value="P:nucleoside triphosphate catabolic process"/>
    <property type="evidence" value="ECO:0000318"/>
    <property type="project" value="GO_Central"/>
</dbReference>
<dbReference type="GO" id="GO:0009117">
    <property type="term" value="P:nucleotide metabolic process"/>
    <property type="evidence" value="ECO:0007669"/>
    <property type="project" value="UniProtKB-KW"/>
</dbReference>
<dbReference type="CDD" id="cd00515">
    <property type="entry name" value="HAM1"/>
    <property type="match status" value="1"/>
</dbReference>
<dbReference type="FunFam" id="3.90.950.10:FF:000003">
    <property type="entry name" value="Inosine triphosphate pyrophosphatase"/>
    <property type="match status" value="1"/>
</dbReference>
<dbReference type="Gene3D" id="3.90.950.10">
    <property type="match status" value="1"/>
</dbReference>
<dbReference type="HAMAP" id="MF_03148">
    <property type="entry name" value="HAM1_NTPase"/>
    <property type="match status" value="1"/>
</dbReference>
<dbReference type="InterPro" id="IPR027502">
    <property type="entry name" value="ITPase"/>
</dbReference>
<dbReference type="InterPro" id="IPR029001">
    <property type="entry name" value="ITPase-like_fam"/>
</dbReference>
<dbReference type="InterPro" id="IPR002637">
    <property type="entry name" value="RdgB/HAM1"/>
</dbReference>
<dbReference type="NCBIfam" id="TIGR00042">
    <property type="entry name" value="RdgB/HAM1 family non-canonical purine NTP pyrophosphatase"/>
    <property type="match status" value="1"/>
</dbReference>
<dbReference type="PANTHER" id="PTHR11067:SF9">
    <property type="entry name" value="INOSINE TRIPHOSPHATE PYROPHOSPHATASE"/>
    <property type="match status" value="1"/>
</dbReference>
<dbReference type="PANTHER" id="PTHR11067">
    <property type="entry name" value="INOSINE TRIPHOSPHATE PYROPHOSPHATASE/HAM1 PROTEIN"/>
    <property type="match status" value="1"/>
</dbReference>
<dbReference type="Pfam" id="PF01725">
    <property type="entry name" value="Ham1p_like"/>
    <property type="match status" value="1"/>
</dbReference>
<dbReference type="SUPFAM" id="SSF52972">
    <property type="entry name" value="ITPase-like"/>
    <property type="match status" value="1"/>
</dbReference>
<reference key="1">
    <citation type="journal article" date="2007" name="Plant Cell">
        <title>Dothideomycete-plant interactions illuminated by genome sequencing and EST analysis of the wheat pathogen Stagonospora nodorum.</title>
        <authorList>
            <person name="Hane J.K."/>
            <person name="Lowe R.G.T."/>
            <person name="Solomon P.S."/>
            <person name="Tan K.-C."/>
            <person name="Schoch C.L."/>
            <person name="Spatafora J.W."/>
            <person name="Crous P.W."/>
            <person name="Kodira C.D."/>
            <person name="Birren B.W."/>
            <person name="Galagan J.E."/>
            <person name="Torriani S.F.F."/>
            <person name="McDonald B.A."/>
            <person name="Oliver R.P."/>
        </authorList>
    </citation>
    <scope>NUCLEOTIDE SEQUENCE [LARGE SCALE GENOMIC DNA]</scope>
    <source>
        <strain>SN15 / ATCC MYA-4574 / FGSC 10173</strain>
    </source>
</reference>
<organism>
    <name type="scientific">Phaeosphaeria nodorum (strain SN15 / ATCC MYA-4574 / FGSC 10173)</name>
    <name type="common">Glume blotch fungus</name>
    <name type="synonym">Parastagonospora nodorum</name>
    <dbReference type="NCBI Taxonomy" id="321614"/>
    <lineage>
        <taxon>Eukaryota</taxon>
        <taxon>Fungi</taxon>
        <taxon>Dikarya</taxon>
        <taxon>Ascomycota</taxon>
        <taxon>Pezizomycotina</taxon>
        <taxon>Dothideomycetes</taxon>
        <taxon>Pleosporomycetidae</taxon>
        <taxon>Pleosporales</taxon>
        <taxon>Pleosporineae</taxon>
        <taxon>Phaeosphaeriaceae</taxon>
        <taxon>Parastagonospora</taxon>
    </lineage>
</organism>
<evidence type="ECO:0000255" key="1">
    <source>
        <dbReference type="HAMAP-Rule" id="MF_03148"/>
    </source>
</evidence>
<gene>
    <name type="ORF">SNOG_09421</name>
</gene>
<feature type="chain" id="PRO_0000413146" description="Inosine triphosphate pyrophosphatase">
    <location>
        <begin position="1"/>
        <end position="188"/>
    </location>
</feature>
<feature type="binding site" evidence="1">
    <location>
        <begin position="12"/>
        <end position="17"/>
    </location>
    <ligand>
        <name>ITP</name>
        <dbReference type="ChEBI" id="CHEBI:61402"/>
    </ligand>
</feature>
<feature type="binding site" evidence="1">
    <location>
        <position position="40"/>
    </location>
    <ligand>
        <name>Mg(2+)</name>
        <dbReference type="ChEBI" id="CHEBI:18420"/>
    </ligand>
</feature>
<feature type="binding site" evidence="1">
    <location>
        <position position="52"/>
    </location>
    <ligand>
        <name>ITP</name>
        <dbReference type="ChEBI" id="CHEBI:61402"/>
    </ligand>
</feature>
<feature type="binding site" evidence="1">
    <location>
        <begin position="68"/>
        <end position="69"/>
    </location>
    <ligand>
        <name>ITP</name>
        <dbReference type="ChEBI" id="CHEBI:61402"/>
    </ligand>
</feature>
<feature type="binding site" evidence="1">
    <location>
        <position position="85"/>
    </location>
    <ligand>
        <name>ITP</name>
        <dbReference type="ChEBI" id="CHEBI:61402"/>
    </ligand>
</feature>
<feature type="binding site" evidence="1">
    <location>
        <begin position="144"/>
        <end position="147"/>
    </location>
    <ligand>
        <name>ITP</name>
        <dbReference type="ChEBI" id="CHEBI:61402"/>
    </ligand>
</feature>
<feature type="binding site" evidence="1">
    <location>
        <position position="165"/>
    </location>
    <ligand>
        <name>ITP</name>
        <dbReference type="ChEBI" id="CHEBI:61402"/>
    </ligand>
</feature>
<feature type="binding site" evidence="1">
    <location>
        <begin position="170"/>
        <end position="171"/>
    </location>
    <ligand>
        <name>ITP</name>
        <dbReference type="ChEBI" id="CHEBI:61402"/>
    </ligand>
</feature>
<comment type="function">
    <text evidence="1">Pyrophosphatase that hydrolyzes non-canonical purine nucleotides such as inosine triphosphate (ITP), deoxyinosine triphosphate (dITP) or xanthosine 5'-triphosphate (XTP) to their respective monophosphate derivatives. The enzyme does not distinguish between the deoxy- and ribose forms. Probably excludes non-canonical purines from RNA and DNA precursor pools, thus preventing their incorporation into RNA and DNA and avoiding chromosomal lesions.</text>
</comment>
<comment type="catalytic activity">
    <reaction evidence="1">
        <text>ITP + H2O = IMP + diphosphate + H(+)</text>
        <dbReference type="Rhea" id="RHEA:29399"/>
        <dbReference type="ChEBI" id="CHEBI:15377"/>
        <dbReference type="ChEBI" id="CHEBI:15378"/>
        <dbReference type="ChEBI" id="CHEBI:33019"/>
        <dbReference type="ChEBI" id="CHEBI:58053"/>
        <dbReference type="ChEBI" id="CHEBI:61402"/>
        <dbReference type="EC" id="3.6.1.66"/>
    </reaction>
    <physiologicalReaction direction="left-to-right" evidence="1">
        <dbReference type="Rhea" id="RHEA:29400"/>
    </physiologicalReaction>
</comment>
<comment type="catalytic activity">
    <reaction evidence="1">
        <text>dITP + H2O = dIMP + diphosphate + H(+)</text>
        <dbReference type="Rhea" id="RHEA:28342"/>
        <dbReference type="ChEBI" id="CHEBI:15377"/>
        <dbReference type="ChEBI" id="CHEBI:15378"/>
        <dbReference type="ChEBI" id="CHEBI:33019"/>
        <dbReference type="ChEBI" id="CHEBI:61194"/>
        <dbReference type="ChEBI" id="CHEBI:61382"/>
        <dbReference type="EC" id="3.6.1.66"/>
    </reaction>
    <physiologicalReaction direction="left-to-right" evidence="1">
        <dbReference type="Rhea" id="RHEA:28343"/>
    </physiologicalReaction>
</comment>
<comment type="catalytic activity">
    <reaction evidence="1">
        <text>XTP + H2O = XMP + diphosphate + H(+)</text>
        <dbReference type="Rhea" id="RHEA:28610"/>
        <dbReference type="ChEBI" id="CHEBI:15377"/>
        <dbReference type="ChEBI" id="CHEBI:15378"/>
        <dbReference type="ChEBI" id="CHEBI:33019"/>
        <dbReference type="ChEBI" id="CHEBI:57464"/>
        <dbReference type="ChEBI" id="CHEBI:61314"/>
        <dbReference type="EC" id="3.6.1.66"/>
    </reaction>
    <physiologicalReaction direction="left-to-right" evidence="1">
        <dbReference type="Rhea" id="RHEA:28611"/>
    </physiologicalReaction>
</comment>
<comment type="cofactor">
    <cofactor evidence="1">
        <name>Mg(2+)</name>
        <dbReference type="ChEBI" id="CHEBI:18420"/>
    </cofactor>
    <cofactor evidence="1">
        <name>Mn(2+)</name>
        <dbReference type="ChEBI" id="CHEBI:29035"/>
    </cofactor>
    <text evidence="1">Binds 1 divalent metal cation per subunit; can use either Mg(2+) or Mn(2+).</text>
</comment>
<comment type="subunit">
    <text evidence="1">Homodimer.</text>
</comment>
<comment type="subcellular location">
    <subcellularLocation>
        <location evidence="1">Cytoplasm</location>
    </subcellularLocation>
    <subcellularLocation>
        <location evidence="1">Nucleus</location>
    </subcellularLocation>
</comment>
<comment type="similarity">
    <text evidence="1">Belongs to the HAM1 NTPase family.</text>
</comment>
<accession>Q0UFP3</accession>